<gene>
    <name type="primary">hexb2</name>
    <name type="ORF">DDB_G0287659</name>
</gene>
<keyword id="KW-0325">Glycoprotein</keyword>
<keyword id="KW-0326">Glycosidase</keyword>
<keyword id="KW-0378">Hydrolase</keyword>
<keyword id="KW-0458">Lysosome</keyword>
<keyword id="KW-1185">Reference proteome</keyword>
<keyword id="KW-0732">Signal</keyword>
<reference key="1">
    <citation type="journal article" date="2005" name="Nature">
        <title>The genome of the social amoeba Dictyostelium discoideum.</title>
        <authorList>
            <person name="Eichinger L."/>
            <person name="Pachebat J.A."/>
            <person name="Gloeckner G."/>
            <person name="Rajandream M.A."/>
            <person name="Sucgang R."/>
            <person name="Berriman M."/>
            <person name="Song J."/>
            <person name="Olsen R."/>
            <person name="Szafranski K."/>
            <person name="Xu Q."/>
            <person name="Tunggal B."/>
            <person name="Kummerfeld S."/>
            <person name="Madera M."/>
            <person name="Konfortov B.A."/>
            <person name="Rivero F."/>
            <person name="Bankier A.T."/>
            <person name="Lehmann R."/>
            <person name="Hamlin N."/>
            <person name="Davies R."/>
            <person name="Gaudet P."/>
            <person name="Fey P."/>
            <person name="Pilcher K."/>
            <person name="Chen G."/>
            <person name="Saunders D."/>
            <person name="Sodergren E.J."/>
            <person name="Davis P."/>
            <person name="Kerhornou A."/>
            <person name="Nie X."/>
            <person name="Hall N."/>
            <person name="Anjard C."/>
            <person name="Hemphill L."/>
            <person name="Bason N."/>
            <person name="Farbrother P."/>
            <person name="Desany B."/>
            <person name="Just E."/>
            <person name="Morio T."/>
            <person name="Rost R."/>
            <person name="Churcher C.M."/>
            <person name="Cooper J."/>
            <person name="Haydock S."/>
            <person name="van Driessche N."/>
            <person name="Cronin A."/>
            <person name="Goodhead I."/>
            <person name="Muzny D.M."/>
            <person name="Mourier T."/>
            <person name="Pain A."/>
            <person name="Lu M."/>
            <person name="Harper D."/>
            <person name="Lindsay R."/>
            <person name="Hauser H."/>
            <person name="James K.D."/>
            <person name="Quiles M."/>
            <person name="Madan Babu M."/>
            <person name="Saito T."/>
            <person name="Buchrieser C."/>
            <person name="Wardroper A."/>
            <person name="Felder M."/>
            <person name="Thangavelu M."/>
            <person name="Johnson D."/>
            <person name="Knights A."/>
            <person name="Loulseged H."/>
            <person name="Mungall K.L."/>
            <person name="Oliver K."/>
            <person name="Price C."/>
            <person name="Quail M.A."/>
            <person name="Urushihara H."/>
            <person name="Hernandez J."/>
            <person name="Rabbinowitsch E."/>
            <person name="Steffen D."/>
            <person name="Sanders M."/>
            <person name="Ma J."/>
            <person name="Kohara Y."/>
            <person name="Sharp S."/>
            <person name="Simmonds M.N."/>
            <person name="Spiegler S."/>
            <person name="Tivey A."/>
            <person name="Sugano S."/>
            <person name="White B."/>
            <person name="Walker D."/>
            <person name="Woodward J.R."/>
            <person name="Winckler T."/>
            <person name="Tanaka Y."/>
            <person name="Shaulsky G."/>
            <person name="Schleicher M."/>
            <person name="Weinstock G.M."/>
            <person name="Rosenthal A."/>
            <person name="Cox E.C."/>
            <person name="Chisholm R.L."/>
            <person name="Gibbs R.A."/>
            <person name="Loomis W.F."/>
            <person name="Platzer M."/>
            <person name="Kay R.R."/>
            <person name="Williams J.G."/>
            <person name="Dear P.H."/>
            <person name="Noegel A.A."/>
            <person name="Barrell B.G."/>
            <person name="Kuspa A."/>
        </authorList>
    </citation>
    <scope>NUCLEOTIDE SEQUENCE [LARGE SCALE GENOMIC DNA]</scope>
    <source>
        <strain>AX4</strain>
    </source>
</reference>
<name>HEXB2_DICDI</name>
<comment type="function">
    <text evidence="1">Responsible for the degradation of GM2 gangliosides, and a variety of other molecules containing terminal N-acetyl hexosamines.</text>
</comment>
<comment type="catalytic activity">
    <reaction>
        <text>Hydrolysis of terminal non-reducing N-acetyl-D-hexosamine residues in N-acetyl-beta-D-hexosaminides.</text>
        <dbReference type="EC" id="3.2.1.52"/>
    </reaction>
</comment>
<comment type="subcellular location">
    <subcellularLocation>
        <location evidence="1">Lysosome</location>
    </subcellularLocation>
</comment>
<comment type="similarity">
    <text evidence="3">Belongs to the glycosyl hydrolase 20 family.</text>
</comment>
<protein>
    <recommendedName>
        <fullName>Beta-hexosaminidase subunit B2</fullName>
        <ecNumber>3.2.1.52</ecNumber>
    </recommendedName>
    <alternativeName>
        <fullName>Beta-N-acetylhexosaminidase subunit B2</fullName>
    </alternativeName>
    <alternativeName>
        <fullName>N-acetyl-beta-glucosaminidase subunit B2</fullName>
    </alternativeName>
</protein>
<feature type="signal peptide" evidence="2">
    <location>
        <begin position="1"/>
        <end position="19"/>
    </location>
</feature>
<feature type="chain" id="PRO_0000331238" description="Beta-hexosaminidase subunit B2">
    <location>
        <begin position="20"/>
        <end position="564"/>
    </location>
</feature>
<feature type="active site" description="Proton donor" evidence="1">
    <location>
        <position position="357"/>
    </location>
</feature>
<feature type="glycosylation site" description="N-linked (GlcNAc...) asparagine" evidence="2">
    <location>
        <position position="43"/>
    </location>
</feature>
<feature type="glycosylation site" description="N-linked (GlcNAc...) asparagine" evidence="2">
    <location>
        <position position="84"/>
    </location>
</feature>
<feature type="glycosylation site" description="N-linked (GlcNAc...) asparagine" evidence="2">
    <location>
        <position position="303"/>
    </location>
</feature>
<feature type="glycosylation site" description="N-linked (GlcNAc...) asparagine" evidence="2">
    <location>
        <position position="347"/>
    </location>
</feature>
<feature type="glycosylation site" description="N-linked (GlcNAc...) asparagine" evidence="2">
    <location>
        <position position="364"/>
    </location>
</feature>
<feature type="glycosylation site" description="N-linked (GlcNAc...) asparagine" evidence="2">
    <location>
        <position position="377"/>
    </location>
</feature>
<feature type="glycosylation site" description="N-linked (GlcNAc...) asparagine" evidence="2">
    <location>
        <position position="439"/>
    </location>
</feature>
<feature type="glycosylation site" description="N-linked (GlcNAc...) asparagine" evidence="2">
    <location>
        <position position="524"/>
    </location>
</feature>
<feature type="glycosylation site" description="N-linked (GlcNAc...) asparagine" evidence="2">
    <location>
        <position position="551"/>
    </location>
</feature>
<organism>
    <name type="scientific">Dictyostelium discoideum</name>
    <name type="common">Social amoeba</name>
    <dbReference type="NCBI Taxonomy" id="44689"/>
    <lineage>
        <taxon>Eukaryota</taxon>
        <taxon>Amoebozoa</taxon>
        <taxon>Evosea</taxon>
        <taxon>Eumycetozoa</taxon>
        <taxon>Dictyostelia</taxon>
        <taxon>Dictyosteliales</taxon>
        <taxon>Dictyosteliaceae</taxon>
        <taxon>Dictyostelium</taxon>
    </lineage>
</organism>
<dbReference type="EC" id="3.2.1.52"/>
<dbReference type="EMBL" id="AAFI02000103">
    <property type="protein sequence ID" value="EAL63638.1"/>
    <property type="molecule type" value="Genomic_DNA"/>
</dbReference>
<dbReference type="SMR" id="Q54K56"/>
<dbReference type="FunCoup" id="Q54K56">
    <property type="interactions" value="53"/>
</dbReference>
<dbReference type="STRING" id="44689.Q54K56"/>
<dbReference type="GlyCosmos" id="Q54K56">
    <property type="glycosylation" value="9 sites, No reported glycans"/>
</dbReference>
<dbReference type="GlyGen" id="Q54K56">
    <property type="glycosylation" value="9 sites"/>
</dbReference>
<dbReference type="PaxDb" id="44689-DDB0304516"/>
<dbReference type="EnsemblProtists" id="EAL63638">
    <property type="protein sequence ID" value="EAL63638"/>
    <property type="gene ID" value="DDB_G0287659"/>
</dbReference>
<dbReference type="KEGG" id="ddi:DDB_G0287659"/>
<dbReference type="dictyBase" id="DDB_G0287659">
    <property type="gene designation" value="nagD"/>
</dbReference>
<dbReference type="VEuPathDB" id="AmoebaDB:DDB_G0287659"/>
<dbReference type="eggNOG" id="KOG2499">
    <property type="taxonomic scope" value="Eukaryota"/>
</dbReference>
<dbReference type="HOGENOM" id="CLU_007082_0_4_1"/>
<dbReference type="InParanoid" id="Q54K56"/>
<dbReference type="OMA" id="HATDTQS"/>
<dbReference type="PhylomeDB" id="Q54K56"/>
<dbReference type="Reactome" id="R-DDI-2022857">
    <property type="pathway name" value="Keratan sulfate degradation"/>
</dbReference>
<dbReference type="Reactome" id="R-DDI-2024101">
    <property type="pathway name" value="CS/DS degradation"/>
</dbReference>
<dbReference type="Reactome" id="R-DDI-2160916">
    <property type="pathway name" value="Hyaluronan uptake and degradation"/>
</dbReference>
<dbReference type="Reactome" id="R-DDI-6798695">
    <property type="pathway name" value="Neutrophil degranulation"/>
</dbReference>
<dbReference type="Reactome" id="R-DDI-9840310">
    <property type="pathway name" value="Glycosphingolipid catabolism"/>
</dbReference>
<dbReference type="PRO" id="PR:Q54K56"/>
<dbReference type="Proteomes" id="UP000002195">
    <property type="component" value="Chromosome 5"/>
</dbReference>
<dbReference type="GO" id="GO:0005764">
    <property type="term" value="C:lysosome"/>
    <property type="evidence" value="ECO:0000318"/>
    <property type="project" value="GO_Central"/>
</dbReference>
<dbReference type="GO" id="GO:0016020">
    <property type="term" value="C:membrane"/>
    <property type="evidence" value="ECO:0000318"/>
    <property type="project" value="GO_Central"/>
</dbReference>
<dbReference type="GO" id="GO:0004563">
    <property type="term" value="F:beta-N-acetylhexosaminidase activity"/>
    <property type="evidence" value="ECO:0000318"/>
    <property type="project" value="GO_Central"/>
</dbReference>
<dbReference type="GO" id="GO:0005975">
    <property type="term" value="P:carbohydrate metabolic process"/>
    <property type="evidence" value="ECO:0007669"/>
    <property type="project" value="InterPro"/>
</dbReference>
<dbReference type="GO" id="GO:0030203">
    <property type="term" value="P:glycosaminoglycan metabolic process"/>
    <property type="evidence" value="ECO:0000318"/>
    <property type="project" value="GO_Central"/>
</dbReference>
<dbReference type="GO" id="GO:0006491">
    <property type="term" value="P:N-glycan processing"/>
    <property type="evidence" value="ECO:0000318"/>
    <property type="project" value="GO_Central"/>
</dbReference>
<dbReference type="CDD" id="cd06562">
    <property type="entry name" value="GH20_HexA_HexB-like"/>
    <property type="match status" value="1"/>
</dbReference>
<dbReference type="FunFam" id="3.20.20.80:FF:000063">
    <property type="entry name" value="Beta-hexosaminidase"/>
    <property type="match status" value="1"/>
</dbReference>
<dbReference type="Gene3D" id="3.30.379.10">
    <property type="entry name" value="Chitobiase/beta-hexosaminidase domain 2-like"/>
    <property type="match status" value="1"/>
</dbReference>
<dbReference type="Gene3D" id="3.20.20.80">
    <property type="entry name" value="Glycosidases"/>
    <property type="match status" value="1"/>
</dbReference>
<dbReference type="InterPro" id="IPR025705">
    <property type="entry name" value="Beta_hexosaminidase_sua/sub"/>
</dbReference>
<dbReference type="InterPro" id="IPR015883">
    <property type="entry name" value="Glyco_hydro_20_cat"/>
</dbReference>
<dbReference type="InterPro" id="IPR017853">
    <property type="entry name" value="Glycoside_hydrolase_SF"/>
</dbReference>
<dbReference type="InterPro" id="IPR029018">
    <property type="entry name" value="Hex-like_dom2"/>
</dbReference>
<dbReference type="InterPro" id="IPR029019">
    <property type="entry name" value="HEX_eukaryotic_N"/>
</dbReference>
<dbReference type="PANTHER" id="PTHR22600">
    <property type="entry name" value="BETA-HEXOSAMINIDASE"/>
    <property type="match status" value="1"/>
</dbReference>
<dbReference type="PANTHER" id="PTHR22600:SF21">
    <property type="entry name" value="BETA-HEXOSAMINIDASE A"/>
    <property type="match status" value="1"/>
</dbReference>
<dbReference type="Pfam" id="PF00728">
    <property type="entry name" value="Glyco_hydro_20"/>
    <property type="match status" value="1"/>
</dbReference>
<dbReference type="Pfam" id="PF14845">
    <property type="entry name" value="Glycohydro_20b2"/>
    <property type="match status" value="1"/>
</dbReference>
<dbReference type="PIRSF" id="PIRSF001093">
    <property type="entry name" value="B-hxosamndse_ab_euk"/>
    <property type="match status" value="1"/>
</dbReference>
<dbReference type="PRINTS" id="PR00738">
    <property type="entry name" value="GLHYDRLASE20"/>
</dbReference>
<dbReference type="SUPFAM" id="SSF51445">
    <property type="entry name" value="(Trans)glycosidases"/>
    <property type="match status" value="1"/>
</dbReference>
<dbReference type="SUPFAM" id="SSF55545">
    <property type="entry name" value="beta-N-acetylhexosaminidase-like domain"/>
    <property type="match status" value="1"/>
</dbReference>
<accession>Q54K56</accession>
<sequence>MKLKFIFLILFFIIGNSIGIKISKEINKIKLNDISIDGEILLNKSSDSSSSQSSKIINIWPMPKKVLNGDITVYISPHFQFTTNLTKSTTLKKAMDRYYKLIFTEDSKSHSGISILNEIKILVKSEDETLQIGFDESYEIYIDDSGDDGGKIIAETVYGAIRGLETLYQMIGFDYQREYYQIKHCPWIIQDSPRYPHRGVMLDTSRHFYSVDVLKEFIEALAYNKFNVFHWHAVDSQSFPLTSTTFPKITKGSWSSQEIYSTRDIKEIIQHAKEYGIRVELEIDMPGHAYSWGIGYPSVLPANFSHSIQCQQPCPTECNIPLDVSSKESYVIAMGLLEEFNGASMFNESFFHIGGDEVAYSCWNNSLRIVDWMKRENISSFQDAAIFFEIKAIEQLIQLGKTPVMWEDAYLLFGSSGITEKLPEEVVVQIYHDPLLALNTTRDGYKTLQSPYWPYYLDNPSVDWEKVYEFEPSNGIHEKRLRLLLGGETCMWSELVDASNLFAKVFPRAFATAERLWFSIENSNSTTFAKPRLERFRCFLLERGIGAAPLNSTSPDDPNSCYSS</sequence>
<proteinExistence type="inferred from homology"/>
<evidence type="ECO:0000250" key="1"/>
<evidence type="ECO:0000255" key="2"/>
<evidence type="ECO:0000305" key="3"/>